<gene>
    <name evidence="1" type="primary">frr</name>
    <name type="synonym">rrf</name>
    <name type="ordered locus">b0172</name>
    <name type="ordered locus">JW0167</name>
</gene>
<reference key="1">
    <citation type="journal article" date="1989" name="J. Biol. Chem.">
        <title>Molecular cloning and expression of ribosome releasing factor.</title>
        <authorList>
            <person name="Ichikawa S."/>
            <person name="Kaji A."/>
        </authorList>
    </citation>
    <scope>NUCLEOTIDE SEQUENCE [GENOMIC DNA]</scope>
    <scope>PARTIAL PROTEIN SEQUENCE</scope>
    <source>
        <strain>MRE-600</strain>
    </source>
</reference>
<reference key="2">
    <citation type="journal article" date="1992" name="J. Bacteriol.">
        <title>Identification and characterization of the smbA gene, a suppressor of the mukB null mutant of Escherichia coli.</title>
        <authorList>
            <person name="Yamanaka K."/>
            <person name="Ogura T."/>
            <person name="Niki H."/>
            <person name="Hiraga S."/>
        </authorList>
    </citation>
    <scope>NUCLEOTIDE SEQUENCE [GENOMIC DNA]</scope>
</reference>
<reference key="3">
    <citation type="journal article" date="1994" name="Nucleic Acids Res.">
        <title>Systematic sequencing of the Escherichia coli genome: analysis of the 2.4-4.1 min (110,917-193,643 bp) region.</title>
        <authorList>
            <person name="Fujita N."/>
            <person name="Mori H."/>
            <person name="Yura T."/>
            <person name="Ishihama A."/>
        </authorList>
    </citation>
    <scope>NUCLEOTIDE SEQUENCE [LARGE SCALE GENOMIC DNA]</scope>
    <source>
        <strain>K12 / W3110 / ATCC 27325 / DSM 5911</strain>
    </source>
</reference>
<reference key="4">
    <citation type="submission" date="1996-02" db="EMBL/GenBank/DDBJ databases">
        <title>Systematic sequencing of the Escherichia coli genome: analysis of the 4.0 - 6.0 min (189,987 - 281,416bp) region.</title>
        <authorList>
            <person name="Takemoto K."/>
            <person name="Mori H."/>
            <person name="Murayama N."/>
            <person name="Kataoka K."/>
            <person name="Yano M."/>
            <person name="Itoh T."/>
            <person name="Yamamoto Y."/>
            <person name="Inokuchi H."/>
            <person name="Miki T."/>
            <person name="Hatada E."/>
            <person name="Fukuda R."/>
            <person name="Ichihara S."/>
            <person name="Mizuno T."/>
            <person name="Makino K."/>
            <person name="Nakata A."/>
            <person name="Yura T."/>
            <person name="Sampei G."/>
            <person name="Mizobuchi K."/>
        </authorList>
    </citation>
    <scope>NUCLEOTIDE SEQUENCE [LARGE SCALE GENOMIC DNA]</scope>
    <source>
        <strain>K12 / W3110 / ATCC 27325 / DSM 5911</strain>
    </source>
</reference>
<reference key="5">
    <citation type="submission" date="1997-01" db="EMBL/GenBank/DDBJ databases">
        <title>Sequence of minutes 4-25 of Escherichia coli.</title>
        <authorList>
            <person name="Chung E."/>
            <person name="Allen E."/>
            <person name="Araujo R."/>
            <person name="Aparicio A.M."/>
            <person name="Davis K."/>
            <person name="Duncan M."/>
            <person name="Federspiel N."/>
            <person name="Hyman R."/>
            <person name="Kalman S."/>
            <person name="Komp C."/>
            <person name="Kurdi O."/>
            <person name="Lew H."/>
            <person name="Lin D."/>
            <person name="Namath A."/>
            <person name="Oefner P."/>
            <person name="Roberts D."/>
            <person name="Schramm S."/>
            <person name="Davis R.W."/>
        </authorList>
    </citation>
    <scope>NUCLEOTIDE SEQUENCE [LARGE SCALE GENOMIC DNA]</scope>
    <source>
        <strain>K12 / MG1655 / ATCC 47076</strain>
    </source>
</reference>
<reference key="6">
    <citation type="journal article" date="1997" name="Science">
        <title>The complete genome sequence of Escherichia coli K-12.</title>
        <authorList>
            <person name="Blattner F.R."/>
            <person name="Plunkett G. III"/>
            <person name="Bloch C.A."/>
            <person name="Perna N.T."/>
            <person name="Burland V."/>
            <person name="Riley M."/>
            <person name="Collado-Vides J."/>
            <person name="Glasner J.D."/>
            <person name="Rode C.K."/>
            <person name="Mayhew G.F."/>
            <person name="Gregor J."/>
            <person name="Davis N.W."/>
            <person name="Kirkpatrick H.A."/>
            <person name="Goeden M.A."/>
            <person name="Rose D.J."/>
            <person name="Mau B."/>
            <person name="Shao Y."/>
        </authorList>
    </citation>
    <scope>NUCLEOTIDE SEQUENCE [LARGE SCALE GENOMIC DNA]</scope>
    <source>
        <strain>K12 / MG1655 / ATCC 47076</strain>
    </source>
</reference>
<reference key="7">
    <citation type="journal article" date="2006" name="Mol. Syst. Biol.">
        <title>Highly accurate genome sequences of Escherichia coli K-12 strains MG1655 and W3110.</title>
        <authorList>
            <person name="Hayashi K."/>
            <person name="Morooka N."/>
            <person name="Yamamoto Y."/>
            <person name="Fujita K."/>
            <person name="Isono K."/>
            <person name="Choi S."/>
            <person name="Ohtsubo E."/>
            <person name="Baba T."/>
            <person name="Wanner B.L."/>
            <person name="Mori H."/>
            <person name="Horiuchi T."/>
        </authorList>
    </citation>
    <scope>NUCLEOTIDE SEQUENCE [LARGE SCALE GENOMIC DNA]</scope>
    <source>
        <strain>K12 / W3110 / ATCC 27325 / DSM 5911</strain>
    </source>
</reference>
<reference key="8">
    <citation type="journal article" date="1997" name="Electrophoresis">
        <title>Comparing the predicted and observed properties of proteins encoded in the genome of Escherichia coli K-12.</title>
        <authorList>
            <person name="Link A.J."/>
            <person name="Robison K."/>
            <person name="Church G.M."/>
        </authorList>
    </citation>
    <scope>PROTEIN SEQUENCE OF 1-12</scope>
    <source>
        <strain>K12 / EMG2</strain>
    </source>
</reference>
<reference key="9">
    <citation type="submission" date="1994-09" db="UniProtKB">
        <authorList>
            <person name="Pasquali C."/>
            <person name="Sanchez J.-C."/>
            <person name="Ravier F."/>
            <person name="Golaz O."/>
            <person name="Hughes G.J."/>
            <person name="Frutiger S."/>
            <person name="Paquet N."/>
            <person name="Wilkins M."/>
            <person name="Appel R.D."/>
            <person name="Bairoch A."/>
            <person name="Hochstrasser D.F."/>
        </authorList>
    </citation>
    <scope>PROTEIN SEQUENCE OF 1-11</scope>
    <source>
        <strain>K12 / W3110 / ATCC 27325 / DSM 5911</strain>
    </source>
</reference>
<reference key="10">
    <citation type="journal article" date="1991" name="J. Bacteriol.">
        <title>Identification of the promoter region of the ribosome-releasing factor cistron (frr).</title>
        <authorList>
            <person name="Shimizu I."/>
            <person name="Kaji A."/>
        </authorList>
    </citation>
    <scope>NUCLEOTIDE SEQUENCE [GENOMIC DNA] OF 1-5</scope>
</reference>
<reference key="11">
    <citation type="journal article" date="1994" name="Proc. Natl. Acad. Sci. U.S.A.">
        <title>Ribosome recycling factor (ribosome releasing factor) is essential for bacterial growth.</title>
        <authorList>
            <person name="Janosi L."/>
            <person name="Shimizu I."/>
            <person name="Kaji A."/>
        </authorList>
    </citation>
    <scope>CHARACTERIZATION</scope>
</reference>
<reference key="12">
    <citation type="journal article" date="2009" name="Mol. Cell. Proteomics">
        <title>Lysine acetylation is a highly abundant and evolutionarily conserved modification in Escherichia coli.</title>
        <authorList>
            <person name="Zhang J."/>
            <person name="Sprung R."/>
            <person name="Pei J."/>
            <person name="Tan X."/>
            <person name="Kim S."/>
            <person name="Zhu H."/>
            <person name="Liu C.F."/>
            <person name="Grishin N.V."/>
            <person name="Zhao Y."/>
        </authorList>
    </citation>
    <scope>ACETYLATION [LARGE SCALE ANALYSIS] AT LYS-162</scope>
    <scope>IDENTIFICATION BY MASS SPECTROMETRY</scope>
    <source>
        <strain>K12 / JW1106</strain>
        <strain>K12 / MG1655 / ATCC 47076</strain>
    </source>
</reference>
<reference key="13">
    <citation type="journal article" date="2004" name="Proc. Natl. Acad. Sci. U.S.A.">
        <title>Visualization of ribosome-recycling factor on the Escherichia coli 70S ribosome: functional implications.</title>
        <authorList>
            <person name="Agrawal R.K."/>
            <person name="Sharma M.R."/>
            <person name="Kiel M.C."/>
            <person name="Hirokawa G."/>
            <person name="Booth T.M."/>
            <person name="Spahn C.M."/>
            <person name="Grassucci R.A."/>
            <person name="Kaji A."/>
            <person name="Frank J."/>
        </authorList>
    </citation>
    <scope>STRUCTURE BY ELECTRON MICROSCOPY (12.0 ANGSTROMS)</scope>
</reference>
<sequence>MISDIRKDAEVRMDKCVEAFKTQISKIRTGRASPSLLDGIVVEYYGTPTPLRQLASVTVEDSRTLKINVFDRSMSPAVEKAIMASDLGLNPNSAGSDIRVPLPPLTEERRKDLTKIVRGEAEQARVAVRNVRRDANDKVKALLKDKEISEDDDRRSQDDVQKLTDAAIKKIEAALADKEAELMQF</sequence>
<feature type="chain" id="PRO_0000167454" description="Ribosome-recycling factor">
    <location>
        <begin position="1"/>
        <end position="185"/>
    </location>
</feature>
<feature type="modified residue" description="N6-acetyllysine" evidence="1 2">
    <location>
        <position position="162"/>
    </location>
</feature>
<feature type="helix" evidence="3">
    <location>
        <begin position="3"/>
        <end position="24"/>
    </location>
</feature>
<feature type="helix" evidence="3">
    <location>
        <begin position="34"/>
        <end position="37"/>
    </location>
</feature>
<feature type="strand" evidence="3">
    <location>
        <begin position="41"/>
        <end position="44"/>
    </location>
</feature>
<feature type="strand" evidence="3">
    <location>
        <begin position="47"/>
        <end position="50"/>
    </location>
</feature>
<feature type="helix" evidence="3">
    <location>
        <begin position="51"/>
        <end position="53"/>
    </location>
</feature>
<feature type="strand" evidence="3">
    <location>
        <begin position="55"/>
        <end position="61"/>
    </location>
</feature>
<feature type="strand" evidence="3">
    <location>
        <begin position="64"/>
        <end position="71"/>
    </location>
</feature>
<feature type="helix" evidence="3">
    <location>
        <begin position="72"/>
        <end position="74"/>
    </location>
</feature>
<feature type="helix" evidence="3">
    <location>
        <begin position="75"/>
        <end position="83"/>
    </location>
</feature>
<feature type="strand" evidence="3">
    <location>
        <begin position="92"/>
        <end position="101"/>
    </location>
</feature>
<feature type="helix" evidence="3">
    <location>
        <begin position="107"/>
        <end position="145"/>
    </location>
</feature>
<feature type="strand" evidence="3">
    <location>
        <begin position="146"/>
        <end position="148"/>
    </location>
</feature>
<feature type="helix" evidence="3">
    <location>
        <begin position="150"/>
        <end position="184"/>
    </location>
</feature>
<name>RRF_ECOLI</name>
<proteinExistence type="evidence at protein level"/>
<dbReference type="EMBL" id="J05113">
    <property type="protein sequence ID" value="AAA24607.1"/>
    <property type="molecule type" value="Genomic_DNA"/>
</dbReference>
<dbReference type="EMBL" id="D13334">
    <property type="protein sequence ID" value="BAA02599.1"/>
    <property type="molecule type" value="Genomic_DNA"/>
</dbReference>
<dbReference type="EMBL" id="U70214">
    <property type="protein sequence ID" value="AAB08601.1"/>
    <property type="molecule type" value="Genomic_DNA"/>
</dbReference>
<dbReference type="EMBL" id="U00096">
    <property type="protein sequence ID" value="AAC73283.1"/>
    <property type="molecule type" value="Genomic_DNA"/>
</dbReference>
<dbReference type="EMBL" id="AP009048">
    <property type="protein sequence ID" value="BAB96748.1"/>
    <property type="molecule type" value="Genomic_DNA"/>
</dbReference>
<dbReference type="EMBL" id="M69029">
    <property type="status" value="NOT_ANNOTATED_CDS"/>
    <property type="molecule type" value="Genomic_DNA"/>
</dbReference>
<dbReference type="PIR" id="A34495">
    <property type="entry name" value="A34495"/>
</dbReference>
<dbReference type="RefSeq" id="NP_414714.1">
    <property type="nucleotide sequence ID" value="NC_000913.3"/>
</dbReference>
<dbReference type="RefSeq" id="WP_000622418.1">
    <property type="nucleotide sequence ID" value="NZ_STEB01000032.1"/>
</dbReference>
<dbReference type="PDB" id="1EK8">
    <property type="method" value="X-ray"/>
    <property type="resolution" value="2.30 A"/>
    <property type="chains" value="A=1-185"/>
</dbReference>
<dbReference type="PDB" id="1ISE">
    <property type="method" value="X-ray"/>
    <property type="resolution" value="2.20 A"/>
    <property type="chains" value="A=1-185"/>
</dbReference>
<dbReference type="PDB" id="1Y69">
    <property type="method" value="X-ray"/>
    <property type="resolution" value="3.33 A"/>
    <property type="chains" value="8=1-30, 8=106-185"/>
</dbReference>
<dbReference type="PDB" id="1ZN0">
    <property type="method" value="EM"/>
    <property type="resolution" value="15.50 A"/>
    <property type="chains" value="A=1-185"/>
</dbReference>
<dbReference type="PDB" id="1ZN1">
    <property type="method" value="EM"/>
    <property type="resolution" value="14.10 A"/>
    <property type="chains" value="A=1-185"/>
</dbReference>
<dbReference type="PDB" id="2RDO">
    <property type="method" value="EM"/>
    <property type="resolution" value="9.10 A"/>
    <property type="chains" value="8=1-185"/>
</dbReference>
<dbReference type="PDB" id="4V9C">
    <property type="method" value="X-ray"/>
    <property type="resolution" value="3.30 A"/>
    <property type="chains" value="CY=1-185"/>
</dbReference>
<dbReference type="PDB" id="4V9D">
    <property type="method" value="X-ray"/>
    <property type="resolution" value="3.00 A"/>
    <property type="chains" value="AY=2-183"/>
</dbReference>
<dbReference type="PDB" id="4WOI">
    <property type="method" value="X-ray"/>
    <property type="resolution" value="3.00 A"/>
    <property type="chains" value="AV=1-185"/>
</dbReference>
<dbReference type="PDBsum" id="1EK8"/>
<dbReference type="PDBsum" id="1ISE"/>
<dbReference type="PDBsum" id="1Y69"/>
<dbReference type="PDBsum" id="1ZN0"/>
<dbReference type="PDBsum" id="1ZN1"/>
<dbReference type="PDBsum" id="2RDO"/>
<dbReference type="PDBsum" id="4V9C"/>
<dbReference type="PDBsum" id="4V9D"/>
<dbReference type="PDBsum" id="4WOI"/>
<dbReference type="EMDB" id="EMD-1127"/>
<dbReference type="EMDB" id="EMD-1128"/>
<dbReference type="EMDB" id="EMD-1430"/>
<dbReference type="SMR" id="P0A805"/>
<dbReference type="BioGRID" id="4259750">
    <property type="interactions" value="64"/>
</dbReference>
<dbReference type="BioGRID" id="850482">
    <property type="interactions" value="32"/>
</dbReference>
<dbReference type="DIP" id="DIP-48120N"/>
<dbReference type="FunCoup" id="P0A805">
    <property type="interactions" value="818"/>
</dbReference>
<dbReference type="IntAct" id="P0A805">
    <property type="interactions" value="37"/>
</dbReference>
<dbReference type="STRING" id="511145.b0172"/>
<dbReference type="DrugBank" id="DB04082">
    <property type="generic name" value="Decyloxy-Methanol"/>
</dbReference>
<dbReference type="iPTMnet" id="P0A805"/>
<dbReference type="jPOST" id="P0A805"/>
<dbReference type="PaxDb" id="511145-b0172"/>
<dbReference type="EnsemblBacteria" id="AAC73283">
    <property type="protein sequence ID" value="AAC73283"/>
    <property type="gene ID" value="b0172"/>
</dbReference>
<dbReference type="GeneID" id="93777253"/>
<dbReference type="GeneID" id="946122"/>
<dbReference type="KEGG" id="ecj:JW0167"/>
<dbReference type="KEGG" id="eco:b0172"/>
<dbReference type="KEGG" id="ecoc:C3026_00785"/>
<dbReference type="PATRIC" id="fig|1411691.4.peg.2108"/>
<dbReference type="EchoBASE" id="EB0331"/>
<dbReference type="eggNOG" id="COG0233">
    <property type="taxonomic scope" value="Bacteria"/>
</dbReference>
<dbReference type="HOGENOM" id="CLU_073981_2_1_6"/>
<dbReference type="InParanoid" id="P0A805"/>
<dbReference type="OMA" id="FNPMNNG"/>
<dbReference type="OrthoDB" id="9804006at2"/>
<dbReference type="PhylomeDB" id="P0A805"/>
<dbReference type="BioCyc" id="EcoCyc:EG10335-MONOMER"/>
<dbReference type="EvolutionaryTrace" id="P0A805"/>
<dbReference type="PRO" id="PR:P0A805"/>
<dbReference type="Proteomes" id="UP000000625">
    <property type="component" value="Chromosome"/>
</dbReference>
<dbReference type="GO" id="GO:0005737">
    <property type="term" value="C:cytoplasm"/>
    <property type="evidence" value="ECO:0000314"/>
    <property type="project" value="EcoCyc"/>
</dbReference>
<dbReference type="GO" id="GO:0005829">
    <property type="term" value="C:cytosol"/>
    <property type="evidence" value="ECO:0000314"/>
    <property type="project" value="EcoCyc"/>
</dbReference>
<dbReference type="GO" id="GO:0043023">
    <property type="term" value="F:ribosomal large subunit binding"/>
    <property type="evidence" value="ECO:0000314"/>
    <property type="project" value="EcoCyc"/>
</dbReference>
<dbReference type="GO" id="GO:0002184">
    <property type="term" value="P:cytoplasmic translational termination"/>
    <property type="evidence" value="ECO:0000314"/>
    <property type="project" value="EcoCyc"/>
</dbReference>
<dbReference type="GO" id="GO:0006412">
    <property type="term" value="P:translation"/>
    <property type="evidence" value="ECO:0000318"/>
    <property type="project" value="GO_Central"/>
</dbReference>
<dbReference type="CDD" id="cd00520">
    <property type="entry name" value="RRF"/>
    <property type="match status" value="1"/>
</dbReference>
<dbReference type="FunFam" id="1.10.132.20:FF:000001">
    <property type="entry name" value="Ribosome-recycling factor"/>
    <property type="match status" value="1"/>
</dbReference>
<dbReference type="FunFam" id="3.30.1360.40:FF:000001">
    <property type="entry name" value="Ribosome-recycling factor"/>
    <property type="match status" value="1"/>
</dbReference>
<dbReference type="Gene3D" id="3.30.1360.40">
    <property type="match status" value="1"/>
</dbReference>
<dbReference type="Gene3D" id="1.10.132.20">
    <property type="entry name" value="Ribosome-recycling factor"/>
    <property type="match status" value="1"/>
</dbReference>
<dbReference type="HAMAP" id="MF_00040">
    <property type="entry name" value="RRF"/>
    <property type="match status" value="1"/>
</dbReference>
<dbReference type="InterPro" id="IPR002661">
    <property type="entry name" value="Ribosome_recyc_fac"/>
</dbReference>
<dbReference type="InterPro" id="IPR023584">
    <property type="entry name" value="Ribosome_recyc_fac_dom"/>
</dbReference>
<dbReference type="InterPro" id="IPR036191">
    <property type="entry name" value="RRF_sf"/>
</dbReference>
<dbReference type="NCBIfam" id="TIGR00496">
    <property type="entry name" value="frr"/>
    <property type="match status" value="1"/>
</dbReference>
<dbReference type="PANTHER" id="PTHR20982:SF3">
    <property type="entry name" value="MITOCHONDRIAL RIBOSOME RECYCLING FACTOR PSEUDO 1"/>
    <property type="match status" value="1"/>
</dbReference>
<dbReference type="PANTHER" id="PTHR20982">
    <property type="entry name" value="RIBOSOME RECYCLING FACTOR"/>
    <property type="match status" value="1"/>
</dbReference>
<dbReference type="Pfam" id="PF01765">
    <property type="entry name" value="RRF"/>
    <property type="match status" value="1"/>
</dbReference>
<dbReference type="SUPFAM" id="SSF55194">
    <property type="entry name" value="Ribosome recycling factor, RRF"/>
    <property type="match status" value="1"/>
</dbReference>
<protein>
    <recommendedName>
        <fullName evidence="1">Ribosome-recycling factor</fullName>
        <shortName evidence="1">RRF</shortName>
    </recommendedName>
    <alternativeName>
        <fullName evidence="1">Ribosome-releasing factor</fullName>
    </alternativeName>
</protein>
<organism>
    <name type="scientific">Escherichia coli (strain K12)</name>
    <dbReference type="NCBI Taxonomy" id="83333"/>
    <lineage>
        <taxon>Bacteria</taxon>
        <taxon>Pseudomonadati</taxon>
        <taxon>Pseudomonadota</taxon>
        <taxon>Gammaproteobacteria</taxon>
        <taxon>Enterobacterales</taxon>
        <taxon>Enterobacteriaceae</taxon>
        <taxon>Escherichia</taxon>
    </lineage>
</organism>
<comment type="function">
    <text>Responsible for the release of ribosomes from messenger RNA at the termination of protein biosynthesis. May increase the efficiency of translation by recycling ribosomes from one round of translation to another.</text>
</comment>
<comment type="interaction">
    <interactant intactId="EBI-1114349">
        <id>P0A805</id>
    </interactant>
    <interactant intactId="EBI-1129692">
        <id>P0AD49</id>
        <label>raiA</label>
    </interactant>
    <organismsDiffer>false</organismsDiffer>
    <experiments>4</experiments>
</comment>
<comment type="interaction">
    <interactant intactId="EBI-1114349">
        <id>P0A805</id>
    </interactant>
    <interactant intactId="EBI-547288">
        <id>P0A7J7</id>
        <label>rplK</label>
    </interactant>
    <organismsDiffer>false</organismsDiffer>
    <experiments>2</experiments>
</comment>
<comment type="interaction">
    <interactant intactId="EBI-1114349">
        <id>P0A805</id>
    </interactant>
    <interactant intactId="EBI-9129402">
        <id>P0A8E1</id>
        <label>ycfP</label>
    </interactant>
    <organismsDiffer>false</organismsDiffer>
    <experiments>2</experiments>
</comment>
<comment type="subcellular location">
    <subcellularLocation>
        <location>Cytoplasm</location>
    </subcellularLocation>
</comment>
<comment type="similarity">
    <text evidence="1">Belongs to the RRF family.</text>
</comment>
<accession>P0A805</accession>
<accession>P16174</accession>
<evidence type="ECO:0000255" key="1">
    <source>
        <dbReference type="HAMAP-Rule" id="MF_00040"/>
    </source>
</evidence>
<evidence type="ECO:0000269" key="2">
    <source>
    </source>
</evidence>
<evidence type="ECO:0007829" key="3">
    <source>
        <dbReference type="PDB" id="1ISE"/>
    </source>
</evidence>
<keyword id="KW-0002">3D-structure</keyword>
<keyword id="KW-0007">Acetylation</keyword>
<keyword id="KW-0963">Cytoplasm</keyword>
<keyword id="KW-0903">Direct protein sequencing</keyword>
<keyword id="KW-0648">Protein biosynthesis</keyword>
<keyword id="KW-1185">Reference proteome</keyword>